<proteinExistence type="inferred from homology"/>
<feature type="chain" id="PRO_0000414672" description="Cell division protein FtsQ">
    <location>
        <begin position="1"/>
        <end position="293"/>
    </location>
</feature>
<feature type="topological domain" description="Cytoplasmic" evidence="1">
    <location>
        <begin position="1"/>
        <end position="29"/>
    </location>
</feature>
<feature type="transmembrane region" description="Helical" evidence="1">
    <location>
        <begin position="30"/>
        <end position="52"/>
    </location>
</feature>
<feature type="topological domain" description="Periplasmic" evidence="1">
    <location>
        <begin position="53"/>
        <end position="293"/>
    </location>
</feature>
<feature type="domain" description="POTRA" evidence="2">
    <location>
        <begin position="75"/>
        <end position="144"/>
    </location>
</feature>
<sequence>MSQVRSKSQQGKRQAKPQEVVPATILTEQLSTYAFGTVTAGAVMVAVAAWMGGSLASIDERIQGGLDATAKSAGFTVTKISIEGLDPRTKADVLNAVAIPVDSNMFRADPFVIKERIEASVENVSEVRVLRQWPNDIWILAENRRPLALWQTDGEWKVVDQVGKPMDGEDPAEYVELPRVVGPAGGYAAPELLAQLKLHPQISEHLEVAMRVGGRRWDLRLDSGLEIALPEDAQVDEALLAVYNLDEATGVLAEDSEVTRIDARDLERFAVGLGEARAAYDQSSQIDDKSGGA</sequence>
<gene>
    <name evidence="1" type="primary">ftsQ</name>
    <name type="ordered locus">Hbal_0404</name>
</gene>
<evidence type="ECO:0000255" key="1">
    <source>
        <dbReference type="HAMAP-Rule" id="MF_00911"/>
    </source>
</evidence>
<evidence type="ECO:0000255" key="2">
    <source>
        <dbReference type="PROSITE-ProRule" id="PRU01115"/>
    </source>
</evidence>
<dbReference type="EMBL" id="CP001678">
    <property type="protein sequence ID" value="ACT58106.1"/>
    <property type="molecule type" value="Genomic_DNA"/>
</dbReference>
<dbReference type="RefSeq" id="WP_015826256.1">
    <property type="nucleotide sequence ID" value="NC_012982.1"/>
</dbReference>
<dbReference type="SMR" id="C6XMG3"/>
<dbReference type="STRING" id="582402.Hbal_0404"/>
<dbReference type="KEGG" id="hba:Hbal_0404"/>
<dbReference type="eggNOG" id="COG1589">
    <property type="taxonomic scope" value="Bacteria"/>
</dbReference>
<dbReference type="HOGENOM" id="CLU_061141_2_0_5"/>
<dbReference type="OrthoDB" id="9783091at2"/>
<dbReference type="Proteomes" id="UP000002745">
    <property type="component" value="Chromosome"/>
</dbReference>
<dbReference type="GO" id="GO:0032153">
    <property type="term" value="C:cell division site"/>
    <property type="evidence" value="ECO:0007669"/>
    <property type="project" value="UniProtKB-UniRule"/>
</dbReference>
<dbReference type="GO" id="GO:0005886">
    <property type="term" value="C:plasma membrane"/>
    <property type="evidence" value="ECO:0007669"/>
    <property type="project" value="UniProtKB-SubCell"/>
</dbReference>
<dbReference type="GO" id="GO:0090529">
    <property type="term" value="P:cell septum assembly"/>
    <property type="evidence" value="ECO:0007669"/>
    <property type="project" value="InterPro"/>
</dbReference>
<dbReference type="GO" id="GO:0043093">
    <property type="term" value="P:FtsZ-dependent cytokinesis"/>
    <property type="evidence" value="ECO:0007669"/>
    <property type="project" value="UniProtKB-UniRule"/>
</dbReference>
<dbReference type="Gene3D" id="3.40.50.11690">
    <property type="entry name" value="Cell division protein FtsQ/DivIB"/>
    <property type="match status" value="1"/>
</dbReference>
<dbReference type="Gene3D" id="3.10.20.310">
    <property type="entry name" value="membrane protein fhac"/>
    <property type="match status" value="1"/>
</dbReference>
<dbReference type="HAMAP" id="MF_00911">
    <property type="entry name" value="FtsQ_subfam"/>
    <property type="match status" value="1"/>
</dbReference>
<dbReference type="InterPro" id="IPR005548">
    <property type="entry name" value="Cell_div_FtsQ/DivIB_C"/>
</dbReference>
<dbReference type="InterPro" id="IPR026579">
    <property type="entry name" value="FtsQ"/>
</dbReference>
<dbReference type="InterPro" id="IPR045335">
    <property type="entry name" value="FtsQ_C_sf"/>
</dbReference>
<dbReference type="InterPro" id="IPR034746">
    <property type="entry name" value="POTRA"/>
</dbReference>
<dbReference type="InterPro" id="IPR013685">
    <property type="entry name" value="POTRA_FtsQ_type"/>
</dbReference>
<dbReference type="PANTHER" id="PTHR35851">
    <property type="entry name" value="CELL DIVISION PROTEIN FTSQ"/>
    <property type="match status" value="1"/>
</dbReference>
<dbReference type="PANTHER" id="PTHR35851:SF1">
    <property type="entry name" value="CELL DIVISION PROTEIN FTSQ"/>
    <property type="match status" value="1"/>
</dbReference>
<dbReference type="Pfam" id="PF03799">
    <property type="entry name" value="FtsQ_DivIB_C"/>
    <property type="match status" value="1"/>
</dbReference>
<dbReference type="Pfam" id="PF08478">
    <property type="entry name" value="POTRA_1"/>
    <property type="match status" value="1"/>
</dbReference>
<dbReference type="PROSITE" id="PS51779">
    <property type="entry name" value="POTRA"/>
    <property type="match status" value="1"/>
</dbReference>
<protein>
    <recommendedName>
        <fullName evidence="1">Cell division protein FtsQ</fullName>
    </recommendedName>
</protein>
<organism>
    <name type="scientific">Hirschia baltica (strain ATCC 49814 / DSM 5838 / IFAM 1418)</name>
    <dbReference type="NCBI Taxonomy" id="582402"/>
    <lineage>
        <taxon>Bacteria</taxon>
        <taxon>Pseudomonadati</taxon>
        <taxon>Pseudomonadota</taxon>
        <taxon>Alphaproteobacteria</taxon>
        <taxon>Hyphomonadales</taxon>
        <taxon>Hyphomonadaceae</taxon>
        <taxon>Hirschia</taxon>
    </lineage>
</organism>
<keyword id="KW-0131">Cell cycle</keyword>
<keyword id="KW-0132">Cell division</keyword>
<keyword id="KW-0997">Cell inner membrane</keyword>
<keyword id="KW-1003">Cell membrane</keyword>
<keyword id="KW-0472">Membrane</keyword>
<keyword id="KW-1185">Reference proteome</keyword>
<keyword id="KW-0812">Transmembrane</keyword>
<keyword id="KW-1133">Transmembrane helix</keyword>
<accession>C6XMG3</accession>
<name>FTSQ_HIRBI</name>
<reference key="1">
    <citation type="journal article" date="2011" name="J. Bacteriol.">
        <title>Genome sequences of eight morphologically diverse alphaproteobacteria.</title>
        <authorList>
            <consortium name="US DOE Joint Genome Institute"/>
            <person name="Brown P.J."/>
            <person name="Kysela D.T."/>
            <person name="Buechlein A."/>
            <person name="Hemmerich C."/>
            <person name="Brun Y.V."/>
        </authorList>
    </citation>
    <scope>NUCLEOTIDE SEQUENCE [LARGE SCALE GENOMIC DNA]</scope>
    <source>
        <strain>ATCC 49814 / DSM 5838 / IFAM 1418</strain>
    </source>
</reference>
<comment type="function">
    <text evidence="1">Essential cell division protein.</text>
</comment>
<comment type="subcellular location">
    <subcellularLocation>
        <location evidence="1">Cell inner membrane</location>
        <topology evidence="1">Single-pass type II membrane protein</topology>
    </subcellularLocation>
    <text evidence="1">Localizes to the division septum.</text>
</comment>
<comment type="similarity">
    <text evidence="1">Belongs to the FtsQ/DivIB family. FtsQ subfamily.</text>
</comment>